<keyword id="KW-0443">Lipid metabolism</keyword>
<keyword id="KW-1185">Reference proteome</keyword>
<keyword id="KW-0677">Repeat</keyword>
<keyword id="KW-0802">TPR repeat</keyword>
<accession>D3ZC96</accession>
<feature type="chain" id="PRO_0000416770" description="Tetratricopeptide repeat protein 39B">
    <location>
        <begin position="1"/>
        <end position="617"/>
    </location>
</feature>
<feature type="repeat" description="TPR 1">
    <location>
        <begin position="328"/>
        <end position="361"/>
    </location>
</feature>
<feature type="repeat" description="TPR 2">
    <location>
        <begin position="561"/>
        <end position="594"/>
    </location>
</feature>
<sequence length="617" mass="70168">MALVGSRVELDADEDIFEDALETISRSPSDMATSGFHFVPCDTKRTSRQLGAPAVGRAEGSSAKVDLKSGLEECAAALNLFLSNRFKDALELLRPWAKESMYHALGYSTIVVLQAVMTFEQQDIQNGISAMKDALQTCQKYRKKCTVVESFSSLLSRGSLEQLSEEEMHAEICYAECLLQKAALTFVQDENMINFIKGGLKIRTSYQIYKECLSILHVIQKNKEEQHFFYEFEGGVKLGTGAFNLMLSLLPARIIRLLEFIGFSGNRDLGLLQLREGASGSSMRSPLCCLTILAFHTYISLILGTGEVNVAEAESLLAPFLQQFPNGSLILFYHARIELLKGNAEKAQETFRKCISVQEEWKQFHHLCYWELMWIYIYQQNWMQAYYYSDLLCKESKWSKATYVFLKAAILSMLPEEEVAVTKENVVSLFRQVDGLKQRIAGKSLPTEKFAVRKARRYSPSSGVPGKLVLPALEMMYVWNGFSIVGKRKDLSENLLVTVEKAEEALQNQNFTDYSVDDECLVKLLKGCCLKNLQRPLQAELCFNHVLESEKLLKYDHYLVPFTLFELAFLYKSQGEIDKAIKVLETARNNYKDYSLESRLHFRIQAALHLWKKPSSD</sequence>
<dbReference type="EMBL" id="AABR03040249">
    <property type="status" value="NOT_ANNOTATED_CDS"/>
    <property type="molecule type" value="Genomic_DNA"/>
</dbReference>
<dbReference type="EMBL" id="CH473978">
    <property type="protein sequence ID" value="EDM10461.1"/>
    <property type="molecule type" value="Genomic_DNA"/>
</dbReference>
<dbReference type="RefSeq" id="NP_001100135.1">
    <property type="nucleotide sequence ID" value="NM_001106665.1"/>
</dbReference>
<dbReference type="FunCoup" id="D3ZC96">
    <property type="interactions" value="307"/>
</dbReference>
<dbReference type="STRING" id="10116.ENSRNOP00000055409"/>
<dbReference type="PhosphoSitePlus" id="D3ZC96"/>
<dbReference type="jPOST" id="D3ZC96"/>
<dbReference type="PaxDb" id="10116-ENSRNOP00000055409"/>
<dbReference type="PeptideAtlas" id="D3ZC96"/>
<dbReference type="GeneID" id="298186"/>
<dbReference type="KEGG" id="rno:298186"/>
<dbReference type="AGR" id="RGD:1305797"/>
<dbReference type="CTD" id="158219"/>
<dbReference type="RGD" id="1305797">
    <property type="gene designation" value="Ttc39b"/>
</dbReference>
<dbReference type="VEuPathDB" id="HostDB:ENSRNOG00000042603"/>
<dbReference type="eggNOG" id="KOG3783">
    <property type="taxonomic scope" value="Eukaryota"/>
</dbReference>
<dbReference type="HOGENOM" id="CLU_010086_3_0_1"/>
<dbReference type="InParanoid" id="D3ZC96"/>
<dbReference type="OrthoDB" id="43460at2759"/>
<dbReference type="TreeFam" id="TF313761"/>
<dbReference type="PRO" id="PR:D3ZC96"/>
<dbReference type="Proteomes" id="UP000002494">
    <property type="component" value="Chromosome 5"/>
</dbReference>
<dbReference type="Proteomes" id="UP000234681">
    <property type="component" value="Chromosome 5"/>
</dbReference>
<dbReference type="Bgee" id="ENSRNOG00000042603">
    <property type="expression patterns" value="Expressed in duodenum and 18 other cell types or tissues"/>
</dbReference>
<dbReference type="GO" id="GO:0042632">
    <property type="term" value="P:cholesterol homeostasis"/>
    <property type="evidence" value="ECO:0000250"/>
    <property type="project" value="UniProtKB"/>
</dbReference>
<dbReference type="GO" id="GO:0006629">
    <property type="term" value="P:lipid metabolic process"/>
    <property type="evidence" value="ECO:0007669"/>
    <property type="project" value="UniProtKB-KW"/>
</dbReference>
<dbReference type="GO" id="GO:0010887">
    <property type="term" value="P:negative regulation of cholesterol storage"/>
    <property type="evidence" value="ECO:0000250"/>
    <property type="project" value="UniProtKB"/>
</dbReference>
<dbReference type="GO" id="GO:0010874">
    <property type="term" value="P:regulation of cholesterol efflux"/>
    <property type="evidence" value="ECO:0000250"/>
    <property type="project" value="UniProtKB"/>
</dbReference>
<dbReference type="GO" id="GO:0090181">
    <property type="term" value="P:regulation of cholesterol metabolic process"/>
    <property type="evidence" value="ECO:0000250"/>
    <property type="project" value="UniProtKB"/>
</dbReference>
<dbReference type="FunFam" id="1.25.40.10:FF:000273">
    <property type="entry name" value="Tetratricopeptide repeat domain 39B"/>
    <property type="match status" value="1"/>
</dbReference>
<dbReference type="Gene3D" id="1.25.40.10">
    <property type="entry name" value="Tetratricopeptide repeat domain"/>
    <property type="match status" value="2"/>
</dbReference>
<dbReference type="InterPro" id="IPR019412">
    <property type="entry name" value="Iml2/TPR_39"/>
</dbReference>
<dbReference type="InterPro" id="IPR011990">
    <property type="entry name" value="TPR-like_helical_dom_sf"/>
</dbReference>
<dbReference type="PANTHER" id="PTHR31859">
    <property type="entry name" value="TETRATRICOPEPTIDE REPEAT PROTEIN 39 FAMILY MEMBER"/>
    <property type="match status" value="1"/>
</dbReference>
<dbReference type="PANTHER" id="PTHR31859:SF4">
    <property type="entry name" value="TETRATRICOPEPTIDE REPEAT PROTEIN 39B"/>
    <property type="match status" value="1"/>
</dbReference>
<dbReference type="Pfam" id="PF10300">
    <property type="entry name" value="Iml2-TPR_39"/>
    <property type="match status" value="1"/>
</dbReference>
<dbReference type="SUPFAM" id="SSF48452">
    <property type="entry name" value="TPR-like"/>
    <property type="match status" value="1"/>
</dbReference>
<comment type="function">
    <text evidence="1">Regulates high density lipoprotein (HDL) cholesterol metabolism by promoting the ubiquitination and degradation of the oxysterols receptors LXR (NR1H2 and NR1H3).</text>
</comment>
<comment type="similarity">
    <text evidence="2">Belongs to the TTC39 family.</text>
</comment>
<organism>
    <name type="scientific">Rattus norvegicus</name>
    <name type="common">Rat</name>
    <dbReference type="NCBI Taxonomy" id="10116"/>
    <lineage>
        <taxon>Eukaryota</taxon>
        <taxon>Metazoa</taxon>
        <taxon>Chordata</taxon>
        <taxon>Craniata</taxon>
        <taxon>Vertebrata</taxon>
        <taxon>Euteleostomi</taxon>
        <taxon>Mammalia</taxon>
        <taxon>Eutheria</taxon>
        <taxon>Euarchontoglires</taxon>
        <taxon>Glires</taxon>
        <taxon>Rodentia</taxon>
        <taxon>Myomorpha</taxon>
        <taxon>Muroidea</taxon>
        <taxon>Muridae</taxon>
        <taxon>Murinae</taxon>
        <taxon>Rattus</taxon>
    </lineage>
</organism>
<proteinExistence type="inferred from homology"/>
<evidence type="ECO:0000250" key="1">
    <source>
        <dbReference type="UniProtKB" id="Q8BYY4"/>
    </source>
</evidence>
<evidence type="ECO:0000305" key="2"/>
<reference key="1">
    <citation type="journal article" date="2004" name="Nature">
        <title>Genome sequence of the Brown Norway rat yields insights into mammalian evolution.</title>
        <authorList>
            <person name="Gibbs R.A."/>
            <person name="Weinstock G.M."/>
            <person name="Metzker M.L."/>
            <person name="Muzny D.M."/>
            <person name="Sodergren E.J."/>
            <person name="Scherer S."/>
            <person name="Scott G."/>
            <person name="Steffen D."/>
            <person name="Worley K.C."/>
            <person name="Burch P.E."/>
            <person name="Okwuonu G."/>
            <person name="Hines S."/>
            <person name="Lewis L."/>
            <person name="Deramo C."/>
            <person name="Delgado O."/>
            <person name="Dugan-Rocha S."/>
            <person name="Miner G."/>
            <person name="Morgan M."/>
            <person name="Hawes A."/>
            <person name="Gill R."/>
            <person name="Holt R.A."/>
            <person name="Adams M.D."/>
            <person name="Amanatides P.G."/>
            <person name="Baden-Tillson H."/>
            <person name="Barnstead M."/>
            <person name="Chin S."/>
            <person name="Evans C.A."/>
            <person name="Ferriera S."/>
            <person name="Fosler C."/>
            <person name="Glodek A."/>
            <person name="Gu Z."/>
            <person name="Jennings D."/>
            <person name="Kraft C.L."/>
            <person name="Nguyen T."/>
            <person name="Pfannkoch C.M."/>
            <person name="Sitter C."/>
            <person name="Sutton G.G."/>
            <person name="Venter J.C."/>
            <person name="Woodage T."/>
            <person name="Smith D."/>
            <person name="Lee H.-M."/>
            <person name="Gustafson E."/>
            <person name="Cahill P."/>
            <person name="Kana A."/>
            <person name="Doucette-Stamm L."/>
            <person name="Weinstock K."/>
            <person name="Fechtel K."/>
            <person name="Weiss R.B."/>
            <person name="Dunn D.M."/>
            <person name="Green E.D."/>
            <person name="Blakesley R.W."/>
            <person name="Bouffard G.G."/>
            <person name="De Jong P.J."/>
            <person name="Osoegawa K."/>
            <person name="Zhu B."/>
            <person name="Marra M."/>
            <person name="Schein J."/>
            <person name="Bosdet I."/>
            <person name="Fjell C."/>
            <person name="Jones S."/>
            <person name="Krzywinski M."/>
            <person name="Mathewson C."/>
            <person name="Siddiqui A."/>
            <person name="Wye N."/>
            <person name="McPherson J."/>
            <person name="Zhao S."/>
            <person name="Fraser C.M."/>
            <person name="Shetty J."/>
            <person name="Shatsman S."/>
            <person name="Geer K."/>
            <person name="Chen Y."/>
            <person name="Abramzon S."/>
            <person name="Nierman W.C."/>
            <person name="Havlak P.H."/>
            <person name="Chen R."/>
            <person name="Durbin K.J."/>
            <person name="Egan A."/>
            <person name="Ren Y."/>
            <person name="Song X.-Z."/>
            <person name="Li B."/>
            <person name="Liu Y."/>
            <person name="Qin X."/>
            <person name="Cawley S."/>
            <person name="Cooney A.J."/>
            <person name="D'Souza L.M."/>
            <person name="Martin K."/>
            <person name="Wu J.Q."/>
            <person name="Gonzalez-Garay M.L."/>
            <person name="Jackson A.R."/>
            <person name="Kalafus K.J."/>
            <person name="McLeod M.P."/>
            <person name="Milosavljevic A."/>
            <person name="Virk D."/>
            <person name="Volkov A."/>
            <person name="Wheeler D.A."/>
            <person name="Zhang Z."/>
            <person name="Bailey J.A."/>
            <person name="Eichler E.E."/>
            <person name="Tuzun E."/>
            <person name="Birney E."/>
            <person name="Mongin E."/>
            <person name="Ureta-Vidal A."/>
            <person name="Woodwark C."/>
            <person name="Zdobnov E."/>
            <person name="Bork P."/>
            <person name="Suyama M."/>
            <person name="Torrents D."/>
            <person name="Alexandersson M."/>
            <person name="Trask B.J."/>
            <person name="Young J.M."/>
            <person name="Huang H."/>
            <person name="Wang H."/>
            <person name="Xing H."/>
            <person name="Daniels S."/>
            <person name="Gietzen D."/>
            <person name="Schmidt J."/>
            <person name="Stevens K."/>
            <person name="Vitt U."/>
            <person name="Wingrove J."/>
            <person name="Camara F."/>
            <person name="Mar Alba M."/>
            <person name="Abril J.F."/>
            <person name="Guigo R."/>
            <person name="Smit A."/>
            <person name="Dubchak I."/>
            <person name="Rubin E.M."/>
            <person name="Couronne O."/>
            <person name="Poliakov A."/>
            <person name="Huebner N."/>
            <person name="Ganten D."/>
            <person name="Goesele C."/>
            <person name="Hummel O."/>
            <person name="Kreitler T."/>
            <person name="Lee Y.-A."/>
            <person name="Monti J."/>
            <person name="Schulz H."/>
            <person name="Zimdahl H."/>
            <person name="Himmelbauer H."/>
            <person name="Lehrach H."/>
            <person name="Jacob H.J."/>
            <person name="Bromberg S."/>
            <person name="Gullings-Handley J."/>
            <person name="Jensen-Seaman M.I."/>
            <person name="Kwitek A.E."/>
            <person name="Lazar J."/>
            <person name="Pasko D."/>
            <person name="Tonellato P.J."/>
            <person name="Twigger S."/>
            <person name="Ponting C.P."/>
            <person name="Duarte J.M."/>
            <person name="Rice S."/>
            <person name="Goodstadt L."/>
            <person name="Beatson S.A."/>
            <person name="Emes R.D."/>
            <person name="Winter E.E."/>
            <person name="Webber C."/>
            <person name="Brandt P."/>
            <person name="Nyakatura G."/>
            <person name="Adetobi M."/>
            <person name="Chiaromonte F."/>
            <person name="Elnitski L."/>
            <person name="Eswara P."/>
            <person name="Hardison R.C."/>
            <person name="Hou M."/>
            <person name="Kolbe D."/>
            <person name="Makova K."/>
            <person name="Miller W."/>
            <person name="Nekrutenko A."/>
            <person name="Riemer C."/>
            <person name="Schwartz S."/>
            <person name="Taylor J."/>
            <person name="Yang S."/>
            <person name="Zhang Y."/>
            <person name="Lindpaintner K."/>
            <person name="Andrews T.D."/>
            <person name="Caccamo M."/>
            <person name="Clamp M."/>
            <person name="Clarke L."/>
            <person name="Curwen V."/>
            <person name="Durbin R.M."/>
            <person name="Eyras E."/>
            <person name="Searle S.M."/>
            <person name="Cooper G.M."/>
            <person name="Batzoglou S."/>
            <person name="Brudno M."/>
            <person name="Sidow A."/>
            <person name="Stone E.A."/>
            <person name="Payseur B.A."/>
            <person name="Bourque G."/>
            <person name="Lopez-Otin C."/>
            <person name="Puente X.S."/>
            <person name="Chakrabarti K."/>
            <person name="Chatterji S."/>
            <person name="Dewey C."/>
            <person name="Pachter L."/>
            <person name="Bray N."/>
            <person name="Yap V.B."/>
            <person name="Caspi A."/>
            <person name="Tesler G."/>
            <person name="Pevzner P.A."/>
            <person name="Haussler D."/>
            <person name="Roskin K.M."/>
            <person name="Baertsch R."/>
            <person name="Clawson H."/>
            <person name="Furey T.S."/>
            <person name="Hinrichs A.S."/>
            <person name="Karolchik D."/>
            <person name="Kent W.J."/>
            <person name="Rosenbloom K.R."/>
            <person name="Trumbower H."/>
            <person name="Weirauch M."/>
            <person name="Cooper D.N."/>
            <person name="Stenson P.D."/>
            <person name="Ma B."/>
            <person name="Brent M."/>
            <person name="Arumugam M."/>
            <person name="Shteynberg D."/>
            <person name="Copley R.R."/>
            <person name="Taylor M.S."/>
            <person name="Riethman H."/>
            <person name="Mudunuri U."/>
            <person name="Peterson J."/>
            <person name="Guyer M."/>
            <person name="Felsenfeld A."/>
            <person name="Old S."/>
            <person name="Mockrin S."/>
            <person name="Collins F.S."/>
        </authorList>
    </citation>
    <scope>NUCLEOTIDE SEQUENCE [LARGE SCALE GENOMIC DNA]</scope>
    <source>
        <strain>Brown Norway</strain>
    </source>
</reference>
<reference key="2">
    <citation type="submission" date="2005-09" db="EMBL/GenBank/DDBJ databases">
        <authorList>
            <person name="Mural R.J."/>
            <person name="Adams M.D."/>
            <person name="Myers E.W."/>
            <person name="Smith H.O."/>
            <person name="Venter J.C."/>
        </authorList>
    </citation>
    <scope>NUCLEOTIDE SEQUENCE [LARGE SCALE GENOMIC DNA]</scope>
    <source>
        <strain>Brown Norway</strain>
    </source>
</reference>
<gene>
    <name type="primary">Ttc39b</name>
</gene>
<protein>
    <recommendedName>
        <fullName>Tetratricopeptide repeat protein 39B</fullName>
        <shortName>TPR repeat protein 39B</shortName>
    </recommendedName>
</protein>
<name>TT39B_RAT</name>